<proteinExistence type="inferred from homology"/>
<sequence>MNLHEYQAKELLKSYGLPIQEGIIAYSGDEAAAAFDKTPTDIAVIKAQVHAGGRGKAGGVKLVKTREEAKQVTDELIGKNLVTYQTDAAGQPVNFVLVAEDMYPVQTELYLGAVVDRSSRRVTFMASTEGGVEIEKVAEETPEKIFKVNIDPLVGLLPFQAREVAFKLGLEGKQINQFVKLMSGAYQAFVENDIDLLEINPLAVRENGEIVCVDGKIGIDSNALYRLPKIAALQDKSQENERELKAAEFDLNYVALEGNIGCMVNGAGLAMATMDIIKLYGGKPANFLDVGGGATKDRVVEAFKIILEDSSVEGVLINIFGGIVRCDMIAEAIIAAIKEVDVKVPVVVRLEGNNAELGAQILEESGLKLISAQGLSDAAQKIVDAVKA</sequence>
<gene>
    <name evidence="1" type="primary">sucC</name>
    <name type="ordered locus">Pcryo_0114</name>
</gene>
<organism>
    <name type="scientific">Psychrobacter cryohalolentis (strain ATCC BAA-1226 / DSM 17306 / VKM B-2378 / K5)</name>
    <dbReference type="NCBI Taxonomy" id="335284"/>
    <lineage>
        <taxon>Bacteria</taxon>
        <taxon>Pseudomonadati</taxon>
        <taxon>Pseudomonadota</taxon>
        <taxon>Gammaproteobacteria</taxon>
        <taxon>Moraxellales</taxon>
        <taxon>Moraxellaceae</taxon>
        <taxon>Psychrobacter</taxon>
    </lineage>
</organism>
<dbReference type="EC" id="6.2.1.5" evidence="1"/>
<dbReference type="EMBL" id="CP000323">
    <property type="protein sequence ID" value="ABE73898.1"/>
    <property type="molecule type" value="Genomic_DNA"/>
</dbReference>
<dbReference type="RefSeq" id="WP_011512489.1">
    <property type="nucleotide sequence ID" value="NC_007969.1"/>
</dbReference>
<dbReference type="SMR" id="Q1QEK5"/>
<dbReference type="STRING" id="335284.Pcryo_0114"/>
<dbReference type="KEGG" id="pcr:Pcryo_0114"/>
<dbReference type="eggNOG" id="COG0045">
    <property type="taxonomic scope" value="Bacteria"/>
</dbReference>
<dbReference type="HOGENOM" id="CLU_037430_0_2_6"/>
<dbReference type="UniPathway" id="UPA00223">
    <property type="reaction ID" value="UER00999"/>
</dbReference>
<dbReference type="Proteomes" id="UP000002425">
    <property type="component" value="Chromosome"/>
</dbReference>
<dbReference type="GO" id="GO:0005829">
    <property type="term" value="C:cytosol"/>
    <property type="evidence" value="ECO:0007669"/>
    <property type="project" value="TreeGrafter"/>
</dbReference>
<dbReference type="GO" id="GO:0042709">
    <property type="term" value="C:succinate-CoA ligase complex"/>
    <property type="evidence" value="ECO:0007669"/>
    <property type="project" value="TreeGrafter"/>
</dbReference>
<dbReference type="GO" id="GO:0005524">
    <property type="term" value="F:ATP binding"/>
    <property type="evidence" value="ECO:0007669"/>
    <property type="project" value="UniProtKB-UniRule"/>
</dbReference>
<dbReference type="GO" id="GO:0000287">
    <property type="term" value="F:magnesium ion binding"/>
    <property type="evidence" value="ECO:0007669"/>
    <property type="project" value="UniProtKB-UniRule"/>
</dbReference>
<dbReference type="GO" id="GO:0004775">
    <property type="term" value="F:succinate-CoA ligase (ADP-forming) activity"/>
    <property type="evidence" value="ECO:0007669"/>
    <property type="project" value="UniProtKB-UniRule"/>
</dbReference>
<dbReference type="GO" id="GO:0004776">
    <property type="term" value="F:succinate-CoA ligase (GDP-forming) activity"/>
    <property type="evidence" value="ECO:0007669"/>
    <property type="project" value="RHEA"/>
</dbReference>
<dbReference type="GO" id="GO:0006104">
    <property type="term" value="P:succinyl-CoA metabolic process"/>
    <property type="evidence" value="ECO:0007669"/>
    <property type="project" value="TreeGrafter"/>
</dbReference>
<dbReference type="GO" id="GO:0006099">
    <property type="term" value="P:tricarboxylic acid cycle"/>
    <property type="evidence" value="ECO:0007669"/>
    <property type="project" value="UniProtKB-UniRule"/>
</dbReference>
<dbReference type="FunFam" id="3.30.1490.20:FF:000002">
    <property type="entry name" value="Succinate--CoA ligase [ADP-forming] subunit beta"/>
    <property type="match status" value="1"/>
</dbReference>
<dbReference type="FunFam" id="3.30.470.20:FF:000002">
    <property type="entry name" value="Succinate--CoA ligase [ADP-forming] subunit beta"/>
    <property type="match status" value="1"/>
</dbReference>
<dbReference type="FunFam" id="3.40.50.261:FF:000001">
    <property type="entry name" value="Succinate--CoA ligase [ADP-forming] subunit beta"/>
    <property type="match status" value="1"/>
</dbReference>
<dbReference type="Gene3D" id="3.30.1490.20">
    <property type="entry name" value="ATP-grasp fold, A domain"/>
    <property type="match status" value="1"/>
</dbReference>
<dbReference type="Gene3D" id="3.30.470.20">
    <property type="entry name" value="ATP-grasp fold, B domain"/>
    <property type="match status" value="1"/>
</dbReference>
<dbReference type="Gene3D" id="3.40.50.261">
    <property type="entry name" value="Succinyl-CoA synthetase domains"/>
    <property type="match status" value="1"/>
</dbReference>
<dbReference type="HAMAP" id="MF_00558">
    <property type="entry name" value="Succ_CoA_beta"/>
    <property type="match status" value="1"/>
</dbReference>
<dbReference type="InterPro" id="IPR011761">
    <property type="entry name" value="ATP-grasp"/>
</dbReference>
<dbReference type="InterPro" id="IPR013650">
    <property type="entry name" value="ATP-grasp_succ-CoA_synth-type"/>
</dbReference>
<dbReference type="InterPro" id="IPR013815">
    <property type="entry name" value="ATP_grasp_subdomain_1"/>
</dbReference>
<dbReference type="InterPro" id="IPR017866">
    <property type="entry name" value="Succ-CoA_synthase_bsu_CS"/>
</dbReference>
<dbReference type="InterPro" id="IPR005811">
    <property type="entry name" value="SUCC_ACL_C"/>
</dbReference>
<dbReference type="InterPro" id="IPR005809">
    <property type="entry name" value="Succ_CoA_ligase-like_bsu"/>
</dbReference>
<dbReference type="InterPro" id="IPR016102">
    <property type="entry name" value="Succinyl-CoA_synth-like"/>
</dbReference>
<dbReference type="NCBIfam" id="NF001913">
    <property type="entry name" value="PRK00696.1"/>
    <property type="match status" value="1"/>
</dbReference>
<dbReference type="NCBIfam" id="TIGR01016">
    <property type="entry name" value="sucCoAbeta"/>
    <property type="match status" value="1"/>
</dbReference>
<dbReference type="PANTHER" id="PTHR11815:SF10">
    <property type="entry name" value="SUCCINATE--COA LIGASE [GDP-FORMING] SUBUNIT BETA, MITOCHONDRIAL"/>
    <property type="match status" value="1"/>
</dbReference>
<dbReference type="PANTHER" id="PTHR11815">
    <property type="entry name" value="SUCCINYL-COA SYNTHETASE BETA CHAIN"/>
    <property type="match status" value="1"/>
</dbReference>
<dbReference type="Pfam" id="PF08442">
    <property type="entry name" value="ATP-grasp_2"/>
    <property type="match status" value="1"/>
</dbReference>
<dbReference type="Pfam" id="PF00549">
    <property type="entry name" value="Ligase_CoA"/>
    <property type="match status" value="1"/>
</dbReference>
<dbReference type="PIRSF" id="PIRSF001554">
    <property type="entry name" value="SucCS_beta"/>
    <property type="match status" value="1"/>
</dbReference>
<dbReference type="SUPFAM" id="SSF56059">
    <property type="entry name" value="Glutathione synthetase ATP-binding domain-like"/>
    <property type="match status" value="1"/>
</dbReference>
<dbReference type="SUPFAM" id="SSF52210">
    <property type="entry name" value="Succinyl-CoA synthetase domains"/>
    <property type="match status" value="1"/>
</dbReference>
<dbReference type="PROSITE" id="PS50975">
    <property type="entry name" value="ATP_GRASP"/>
    <property type="match status" value="1"/>
</dbReference>
<dbReference type="PROSITE" id="PS01217">
    <property type="entry name" value="SUCCINYL_COA_LIG_3"/>
    <property type="match status" value="1"/>
</dbReference>
<keyword id="KW-0067">ATP-binding</keyword>
<keyword id="KW-0436">Ligase</keyword>
<keyword id="KW-0460">Magnesium</keyword>
<keyword id="KW-0479">Metal-binding</keyword>
<keyword id="KW-0547">Nucleotide-binding</keyword>
<keyword id="KW-0816">Tricarboxylic acid cycle</keyword>
<protein>
    <recommendedName>
        <fullName evidence="1">Succinate--CoA ligase [ADP-forming] subunit beta</fullName>
        <ecNumber evidence="1">6.2.1.5</ecNumber>
    </recommendedName>
    <alternativeName>
        <fullName evidence="1">Succinyl-CoA synthetase subunit beta</fullName>
        <shortName evidence="1">SCS-beta</shortName>
    </alternativeName>
</protein>
<name>SUCC_PSYCK</name>
<comment type="function">
    <text evidence="1">Succinyl-CoA synthetase functions in the citric acid cycle (TCA), coupling the hydrolysis of succinyl-CoA to the synthesis of either ATP or GTP and thus represents the only step of substrate-level phosphorylation in the TCA. The beta subunit provides nucleotide specificity of the enzyme and binds the substrate succinate, while the binding sites for coenzyme A and phosphate are found in the alpha subunit.</text>
</comment>
<comment type="catalytic activity">
    <reaction evidence="1">
        <text>succinate + ATP + CoA = succinyl-CoA + ADP + phosphate</text>
        <dbReference type="Rhea" id="RHEA:17661"/>
        <dbReference type="ChEBI" id="CHEBI:30031"/>
        <dbReference type="ChEBI" id="CHEBI:30616"/>
        <dbReference type="ChEBI" id="CHEBI:43474"/>
        <dbReference type="ChEBI" id="CHEBI:57287"/>
        <dbReference type="ChEBI" id="CHEBI:57292"/>
        <dbReference type="ChEBI" id="CHEBI:456216"/>
        <dbReference type="EC" id="6.2.1.5"/>
    </reaction>
    <physiologicalReaction direction="right-to-left" evidence="1">
        <dbReference type="Rhea" id="RHEA:17663"/>
    </physiologicalReaction>
</comment>
<comment type="catalytic activity">
    <reaction evidence="1">
        <text>GTP + succinate + CoA = succinyl-CoA + GDP + phosphate</text>
        <dbReference type="Rhea" id="RHEA:22120"/>
        <dbReference type="ChEBI" id="CHEBI:30031"/>
        <dbReference type="ChEBI" id="CHEBI:37565"/>
        <dbReference type="ChEBI" id="CHEBI:43474"/>
        <dbReference type="ChEBI" id="CHEBI:57287"/>
        <dbReference type="ChEBI" id="CHEBI:57292"/>
        <dbReference type="ChEBI" id="CHEBI:58189"/>
    </reaction>
    <physiologicalReaction direction="right-to-left" evidence="1">
        <dbReference type="Rhea" id="RHEA:22122"/>
    </physiologicalReaction>
</comment>
<comment type="cofactor">
    <cofactor evidence="1">
        <name>Mg(2+)</name>
        <dbReference type="ChEBI" id="CHEBI:18420"/>
    </cofactor>
    <text evidence="1">Binds 1 Mg(2+) ion per subunit.</text>
</comment>
<comment type="pathway">
    <text evidence="1">Carbohydrate metabolism; tricarboxylic acid cycle; succinate from succinyl-CoA (ligase route): step 1/1.</text>
</comment>
<comment type="subunit">
    <text evidence="1">Heterotetramer of two alpha and two beta subunits.</text>
</comment>
<comment type="similarity">
    <text evidence="1">Belongs to the succinate/malate CoA ligase beta subunit family.</text>
</comment>
<evidence type="ECO:0000255" key="1">
    <source>
        <dbReference type="HAMAP-Rule" id="MF_00558"/>
    </source>
</evidence>
<feature type="chain" id="PRO_1000082177" description="Succinate--CoA ligase [ADP-forming] subunit beta">
    <location>
        <begin position="1"/>
        <end position="388"/>
    </location>
</feature>
<feature type="domain" description="ATP-grasp" evidence="1">
    <location>
        <begin position="9"/>
        <end position="245"/>
    </location>
</feature>
<feature type="binding site" evidence="1">
    <location>
        <position position="46"/>
    </location>
    <ligand>
        <name>ATP</name>
        <dbReference type="ChEBI" id="CHEBI:30616"/>
    </ligand>
</feature>
<feature type="binding site" evidence="1">
    <location>
        <begin position="53"/>
        <end position="55"/>
    </location>
    <ligand>
        <name>ATP</name>
        <dbReference type="ChEBI" id="CHEBI:30616"/>
    </ligand>
</feature>
<feature type="binding site" evidence="1">
    <location>
        <position position="100"/>
    </location>
    <ligand>
        <name>ATP</name>
        <dbReference type="ChEBI" id="CHEBI:30616"/>
    </ligand>
</feature>
<feature type="binding site" evidence="1">
    <location>
        <position position="103"/>
    </location>
    <ligand>
        <name>ATP</name>
        <dbReference type="ChEBI" id="CHEBI:30616"/>
    </ligand>
</feature>
<feature type="binding site" evidence="1">
    <location>
        <position position="108"/>
    </location>
    <ligand>
        <name>ATP</name>
        <dbReference type="ChEBI" id="CHEBI:30616"/>
    </ligand>
</feature>
<feature type="binding site" evidence="1">
    <location>
        <position position="200"/>
    </location>
    <ligand>
        <name>Mg(2+)</name>
        <dbReference type="ChEBI" id="CHEBI:18420"/>
    </ligand>
</feature>
<feature type="binding site" evidence="1">
    <location>
        <position position="214"/>
    </location>
    <ligand>
        <name>Mg(2+)</name>
        <dbReference type="ChEBI" id="CHEBI:18420"/>
    </ligand>
</feature>
<feature type="binding site" evidence="1">
    <location>
        <position position="265"/>
    </location>
    <ligand>
        <name>substrate</name>
        <note>ligand shared with subunit alpha</note>
    </ligand>
</feature>
<feature type="binding site" evidence="1">
    <location>
        <begin position="322"/>
        <end position="324"/>
    </location>
    <ligand>
        <name>substrate</name>
        <note>ligand shared with subunit alpha</note>
    </ligand>
</feature>
<accession>Q1QEK5</accession>
<reference key="1">
    <citation type="submission" date="2006-03" db="EMBL/GenBank/DDBJ databases">
        <title>Complete sequence of chromosome of Psychrobacter cryohalolentis K5.</title>
        <authorList>
            <consortium name="US DOE Joint Genome Institute"/>
            <person name="Copeland A."/>
            <person name="Lucas S."/>
            <person name="Lapidus A."/>
            <person name="Barry K."/>
            <person name="Detter J.C."/>
            <person name="Glavina T."/>
            <person name="Hammon N."/>
            <person name="Israni S."/>
            <person name="Dalin E."/>
            <person name="Tice H."/>
            <person name="Pitluck S."/>
            <person name="Brettin T."/>
            <person name="Bruce D."/>
            <person name="Han C."/>
            <person name="Tapia R."/>
            <person name="Sims D.R."/>
            <person name="Gilna P."/>
            <person name="Schmutz J."/>
            <person name="Larimer F."/>
            <person name="Land M."/>
            <person name="Hauser L."/>
            <person name="Kyrpides N."/>
            <person name="Kim E."/>
            <person name="Richardson P."/>
        </authorList>
    </citation>
    <scope>NUCLEOTIDE SEQUENCE [LARGE SCALE GENOMIC DNA]</scope>
    <source>
        <strain>ATCC BAA-1226 / DSM 17306 / VKM B-2378 / K5</strain>
    </source>
</reference>